<reference key="1">
    <citation type="journal article" date="2004" name="Science">
        <title>The Ashbya gossypii genome as a tool for mapping the ancient Saccharomyces cerevisiae genome.</title>
        <authorList>
            <person name="Dietrich F.S."/>
            <person name="Voegeli S."/>
            <person name="Brachat S."/>
            <person name="Lerch A."/>
            <person name="Gates K."/>
            <person name="Steiner S."/>
            <person name="Mohr C."/>
            <person name="Poehlmann R."/>
            <person name="Luedi P."/>
            <person name="Choi S."/>
            <person name="Wing R.A."/>
            <person name="Flavier A."/>
            <person name="Gaffney T.D."/>
            <person name="Philippsen P."/>
        </authorList>
    </citation>
    <scope>NUCLEOTIDE SEQUENCE [LARGE SCALE GENOMIC DNA]</scope>
    <source>
        <strain>ATCC 10895 / CBS 109.51 / FGSC 9923 / NRRL Y-1056</strain>
    </source>
</reference>
<reference key="2">
    <citation type="journal article" date="2013" name="G3 (Bethesda)">
        <title>Genomes of Ashbya fungi isolated from insects reveal four mating-type loci, numerous translocations, lack of transposons, and distinct gene duplications.</title>
        <authorList>
            <person name="Dietrich F.S."/>
            <person name="Voegeli S."/>
            <person name="Kuo S."/>
            <person name="Philippsen P."/>
        </authorList>
    </citation>
    <scope>GENOME REANNOTATION</scope>
    <source>
        <strain>ATCC 10895 / CBS 109.51 / FGSC 9923 / NRRL Y-1056</strain>
    </source>
</reference>
<protein>
    <recommendedName>
        <fullName evidence="1">Protein SEY1</fullName>
        <ecNumber evidence="1">3.6.5.-</ecNumber>
    </recommendedName>
</protein>
<feature type="chain" id="PRO_0000155127" description="Protein SEY1">
    <location>
        <begin position="1"/>
        <end position="791"/>
    </location>
</feature>
<feature type="topological domain" description="Cytoplasmic" evidence="1">
    <location>
        <begin position="1"/>
        <end position="685"/>
    </location>
</feature>
<feature type="transmembrane region" description="Helical" evidence="1">
    <location>
        <begin position="686"/>
        <end position="706"/>
    </location>
</feature>
<feature type="topological domain" description="Lumenal" evidence="1">
    <location>
        <begin position="707"/>
        <end position="709"/>
    </location>
</feature>
<feature type="transmembrane region" description="Helical" evidence="1">
    <location>
        <begin position="710"/>
        <end position="730"/>
    </location>
</feature>
<feature type="topological domain" description="Cytoplasmic" evidence="1">
    <location>
        <begin position="731"/>
        <end position="791"/>
    </location>
</feature>
<feature type="domain" description="GB1/RHD3-type G" evidence="2">
    <location>
        <begin position="40"/>
        <end position="268"/>
    </location>
</feature>
<feature type="region of interest" description="Disordered" evidence="3">
    <location>
        <begin position="763"/>
        <end position="791"/>
    </location>
</feature>
<feature type="binding site" evidence="1">
    <location>
        <begin position="50"/>
        <end position="57"/>
    </location>
    <ligand>
        <name>GTP</name>
        <dbReference type="ChEBI" id="CHEBI:37565"/>
    </ligand>
</feature>
<dbReference type="EC" id="3.6.5.-" evidence="1"/>
<dbReference type="EMBL" id="AE016820">
    <property type="protein sequence ID" value="AAS54754.1"/>
    <property type="molecule type" value="Genomic_DNA"/>
</dbReference>
<dbReference type="RefSeq" id="NP_986930.1">
    <property type="nucleotide sequence ID" value="NM_211992.1"/>
</dbReference>
<dbReference type="SMR" id="Q74ZD5"/>
<dbReference type="FunCoup" id="Q74ZD5">
    <property type="interactions" value="65"/>
</dbReference>
<dbReference type="STRING" id="284811.Q74ZD5"/>
<dbReference type="EnsemblFungi" id="AAS54754">
    <property type="protein sequence ID" value="AAS54754"/>
    <property type="gene ID" value="AGOS_AGR264C"/>
</dbReference>
<dbReference type="GeneID" id="4623232"/>
<dbReference type="KEGG" id="ago:AGOS_AGR264C"/>
<dbReference type="eggNOG" id="KOG2203">
    <property type="taxonomic scope" value="Eukaryota"/>
</dbReference>
<dbReference type="HOGENOM" id="CLU_011270_0_0_1"/>
<dbReference type="InParanoid" id="Q74ZD5"/>
<dbReference type="OMA" id="PIIKMTE"/>
<dbReference type="OrthoDB" id="1597724at2759"/>
<dbReference type="Proteomes" id="UP000000591">
    <property type="component" value="Chromosome VII"/>
</dbReference>
<dbReference type="GO" id="GO:0005783">
    <property type="term" value="C:endoplasmic reticulum"/>
    <property type="evidence" value="ECO:0000318"/>
    <property type="project" value="GO_Central"/>
</dbReference>
<dbReference type="GO" id="GO:0005789">
    <property type="term" value="C:endoplasmic reticulum membrane"/>
    <property type="evidence" value="ECO:0007669"/>
    <property type="project" value="UniProtKB-SubCell"/>
</dbReference>
<dbReference type="GO" id="GO:0005525">
    <property type="term" value="F:GTP binding"/>
    <property type="evidence" value="ECO:0007669"/>
    <property type="project" value="UniProtKB-UniRule"/>
</dbReference>
<dbReference type="GO" id="GO:0003924">
    <property type="term" value="F:GTPase activity"/>
    <property type="evidence" value="ECO:0000318"/>
    <property type="project" value="GO_Central"/>
</dbReference>
<dbReference type="GO" id="GO:0016320">
    <property type="term" value="P:endoplasmic reticulum membrane fusion"/>
    <property type="evidence" value="ECO:0000318"/>
    <property type="project" value="GO_Central"/>
</dbReference>
<dbReference type="CDD" id="cd01851">
    <property type="entry name" value="GBP"/>
    <property type="match status" value="1"/>
</dbReference>
<dbReference type="FunFam" id="3.40.50.300:FF:000727">
    <property type="entry name" value="Protein SEY1 homolog"/>
    <property type="match status" value="1"/>
</dbReference>
<dbReference type="Gene3D" id="3.40.50.300">
    <property type="entry name" value="P-loop containing nucleotide triphosphate hydrolases"/>
    <property type="match status" value="1"/>
</dbReference>
<dbReference type="HAMAP" id="MF_03109">
    <property type="entry name" value="Sey1"/>
    <property type="match status" value="1"/>
</dbReference>
<dbReference type="InterPro" id="IPR030386">
    <property type="entry name" value="G_GB1_RHD3_dom"/>
</dbReference>
<dbReference type="InterPro" id="IPR027417">
    <property type="entry name" value="P-loop_NTPase"/>
</dbReference>
<dbReference type="InterPro" id="IPR008803">
    <property type="entry name" value="RHD3/Sey1"/>
</dbReference>
<dbReference type="InterPro" id="IPR046758">
    <property type="entry name" value="Sey1/RHD3-like_3HB"/>
</dbReference>
<dbReference type="PANTHER" id="PTHR45923">
    <property type="entry name" value="PROTEIN SEY1"/>
    <property type="match status" value="1"/>
</dbReference>
<dbReference type="PANTHER" id="PTHR45923:SF2">
    <property type="entry name" value="PROTEIN SEY1"/>
    <property type="match status" value="1"/>
</dbReference>
<dbReference type="Pfam" id="PF05879">
    <property type="entry name" value="RHD3_GTPase"/>
    <property type="match status" value="1"/>
</dbReference>
<dbReference type="Pfam" id="PF20428">
    <property type="entry name" value="Sey1_3HB"/>
    <property type="match status" value="1"/>
</dbReference>
<dbReference type="SUPFAM" id="SSF52540">
    <property type="entry name" value="P-loop containing nucleoside triphosphate hydrolases"/>
    <property type="match status" value="1"/>
</dbReference>
<dbReference type="PROSITE" id="PS51715">
    <property type="entry name" value="G_GB1_RHD3"/>
    <property type="match status" value="1"/>
</dbReference>
<sequence>MSEDGASKCQDSIQLIDEQKQFNEKTLEYFKRCIGERDVGLDYHVISVFGSQSSGKSTLLNALFNTKFDTMNAQVKRQQTTKGIWIAHTREVQTTANTGKGVDFFVLDVEGSDGAERGEDKDFERKAALFALATSEVLIVNMWEQQVGLYQGNNMGLLKTVFEVNLSLFGHKKDKQKILLLFVVRDFTGFTPLSSLQETLTNELQAMWSELNKPAGAEGSSLDDFFDFAFTGLSHKLFKPEEFASDVAKLGDKFTDLKREDYYLSGKYHQGLPLDGWSFYADSCWEQIENNKDLDLPTQQTLVANFKTEEIANNAFEHFSTAFSKLSSSLPGPELAASMKELKDQCTKEYDNYGSRYMKAVYLEKRGELLDKIKTKFSDAIAVHMSKLFNSLVSTFQSTVAQNAACQPLSERLKVGKERVMQVFEQETSDFVALELIPSVDADASALLEKIDELAERERGKEMKAIILRAKKYQFTHTRDDIVHLLSHPQDNVWQLVMDHFDDVFRRSVLKYKLPNLGDVTDESTAYDFQLDLIEEDNYALYLKIRSNAWTILYDIIHQYLKEDNVVSILRERFESKFRYDQNDVPRLWKNEEEVDAGFKVAREHALNMLNTLSIASCDGVEIVPDVPLASDEDEAQDEQGLYNEKRFGHILTAIQKEKIIQHFKRFANVAVVEAKRSTIKSHTHIPMWIYAIIAVLGWNEFMLVLRNPLFIALMLLIVGAAYTVHRLNLWTPLATFASAAVNETTHAVKAKLRTILLDDEHPKNASSKPVESFEMQDLSVNETKENANES</sequence>
<proteinExistence type="inferred from homology"/>
<gene>
    <name evidence="1" type="primary">SEY1</name>
    <name type="ordered locus">AGR264C</name>
</gene>
<keyword id="KW-0256">Endoplasmic reticulum</keyword>
<keyword id="KW-0342">GTP-binding</keyword>
<keyword id="KW-0378">Hydrolase</keyword>
<keyword id="KW-0472">Membrane</keyword>
<keyword id="KW-0547">Nucleotide-binding</keyword>
<keyword id="KW-1185">Reference proteome</keyword>
<keyword id="KW-0812">Transmembrane</keyword>
<keyword id="KW-1133">Transmembrane helix</keyword>
<name>SEY1_EREGS</name>
<organism>
    <name type="scientific">Eremothecium gossypii (strain ATCC 10895 / CBS 109.51 / FGSC 9923 / NRRL Y-1056)</name>
    <name type="common">Yeast</name>
    <name type="synonym">Ashbya gossypii</name>
    <dbReference type="NCBI Taxonomy" id="284811"/>
    <lineage>
        <taxon>Eukaryota</taxon>
        <taxon>Fungi</taxon>
        <taxon>Dikarya</taxon>
        <taxon>Ascomycota</taxon>
        <taxon>Saccharomycotina</taxon>
        <taxon>Saccharomycetes</taxon>
        <taxon>Saccharomycetales</taxon>
        <taxon>Saccharomycetaceae</taxon>
        <taxon>Eremothecium</taxon>
    </lineage>
</organism>
<comment type="function">
    <text evidence="1">Cooperates with the reticulon proteins and tubule-shaping DP1 family proteins to generate and maintain the structure of the tubular endoplasmic reticulum network. Has GTPase activity, which is required for its function in ER organization.</text>
</comment>
<comment type="subcellular location">
    <subcellularLocation>
        <location evidence="1">Endoplasmic reticulum membrane</location>
        <topology evidence="1">Multi-pass membrane protein</topology>
    </subcellularLocation>
    <text evidence="1">Enriched in the cortical ER. Concentrated in punctae along the ER tubules.</text>
</comment>
<comment type="similarity">
    <text evidence="2">Belongs to the TRAFAC class dynamin-like GTPase superfamily. GB1/RHD3 GTPase family. RHD3 subfamily.</text>
</comment>
<accession>Q74ZD5</accession>
<evidence type="ECO:0000255" key="1">
    <source>
        <dbReference type="HAMAP-Rule" id="MF_03109"/>
    </source>
</evidence>
<evidence type="ECO:0000255" key="2">
    <source>
        <dbReference type="PROSITE-ProRule" id="PRU01052"/>
    </source>
</evidence>
<evidence type="ECO:0000256" key="3">
    <source>
        <dbReference type="SAM" id="MobiDB-lite"/>
    </source>
</evidence>